<sequence>MATTPMTVVDHEAEEAVAKAREDDKSRQVDAFDAGKPPPFRIGDVRAAVPEHCWHKSPWRSLWYVVRDVAAVVALGTAAAAMDSWAVWPVYWAVQGTMFWAFFVLGHDCGHGSFSDSRTLNSVVGHLLHSFILIPYHGWRISHRTHHQNHGHVDRDESWHPITEGRYRRLPPRAKKIRFTAPYPLLLFPLYLFYRGPDKPGTHFLPSSELFSPKEKGDVMLSTTCWCIMLASLLAMSCAFGPLQVLKMYGLPYLVFVMWLDLVTYLHHHGHHERLPWYRGEEWSYLRGGLTTVDRDYGWINKIHHDIGTHVIHHLFPQIPHYHLVEATKAAKPVLGRYYREPQKSGPLPLPLLGVFLRSIRVNHFVSDHGDVVYYQTDHHLNDTTKQK</sequence>
<dbReference type="EMBL" id="EF206346">
    <property type="protein sequence ID" value="ABN49519.1"/>
    <property type="molecule type" value="mRNA"/>
</dbReference>
<dbReference type="SMR" id="A3F5L2"/>
<dbReference type="EnsemblPlants" id="KXG22757">
    <property type="protein sequence ID" value="KXG22757"/>
    <property type="gene ID" value="SORBI_3008G002800"/>
</dbReference>
<dbReference type="Gramene" id="KXG22757">
    <property type="protein sequence ID" value="KXG22757"/>
    <property type="gene ID" value="SORBI_3008G002800"/>
</dbReference>
<dbReference type="eggNOG" id="ENOG502QTIC">
    <property type="taxonomic scope" value="Eukaryota"/>
</dbReference>
<dbReference type="OMA" id="YRELEPR"/>
<dbReference type="OrthoDB" id="1461976at2759"/>
<dbReference type="BioCyc" id="MetaCyc:MONOMER-19092"/>
<dbReference type="UniPathway" id="UPA00658"/>
<dbReference type="ExpressionAtlas" id="A3F5L2">
    <property type="expression patterns" value="baseline and differential"/>
</dbReference>
<dbReference type="GO" id="GO:0016020">
    <property type="term" value="C:membrane"/>
    <property type="evidence" value="ECO:0007669"/>
    <property type="project" value="UniProtKB-SubCell"/>
</dbReference>
<dbReference type="GO" id="GO:0016717">
    <property type="term" value="F:oxidoreductase activity, acting on paired donors, with oxidation of a pair of donors resulting in the reduction of molecular oxygen to two molecules of water"/>
    <property type="evidence" value="ECO:0007669"/>
    <property type="project" value="InterPro"/>
</dbReference>
<dbReference type="GO" id="GO:0006636">
    <property type="term" value="P:unsaturated fatty acid biosynthetic process"/>
    <property type="evidence" value="ECO:0007669"/>
    <property type="project" value="UniProtKB-UniPathway"/>
</dbReference>
<dbReference type="CDD" id="cd03507">
    <property type="entry name" value="Delta12-FADS-like"/>
    <property type="match status" value="1"/>
</dbReference>
<dbReference type="InterPro" id="IPR005804">
    <property type="entry name" value="FA_desaturase_dom"/>
</dbReference>
<dbReference type="InterPro" id="IPR021863">
    <property type="entry name" value="FAS_N"/>
</dbReference>
<dbReference type="InterPro" id="IPR012171">
    <property type="entry name" value="Fatty_acid_desaturase"/>
</dbReference>
<dbReference type="PANTHER" id="PTHR32100">
    <property type="entry name" value="OMEGA-6 FATTY ACID DESATURASE, CHLOROPLASTIC"/>
    <property type="match status" value="1"/>
</dbReference>
<dbReference type="Pfam" id="PF11960">
    <property type="entry name" value="DUF3474"/>
    <property type="match status" value="1"/>
</dbReference>
<dbReference type="Pfam" id="PF00487">
    <property type="entry name" value="FA_desaturase"/>
    <property type="match status" value="1"/>
</dbReference>
<comment type="pathway">
    <text evidence="5">Lipid metabolism; polyunsaturated fatty acid biosynthesis.</text>
</comment>
<comment type="subcellular location">
    <subcellularLocation>
        <location evidence="1">Membrane</location>
        <topology evidence="1">Multi-pass membrane protein</topology>
    </subcellularLocation>
</comment>
<comment type="tissue specificity">
    <text evidence="3">Highly expressed in root hair cells. Barely detected in panicle, shoot apex, stems and leaves.</text>
</comment>
<comment type="domain">
    <text evidence="5">The histidine box domains may contain the active site and/or be involved in metal ion binding.</text>
</comment>
<comment type="miscellaneous">
    <text evidence="3">Exhibits no detectable activity in the heterologous expression system tested.</text>
</comment>
<comment type="similarity">
    <text evidence="5">Belongs to the fatty acid desaturase type 1 family.</text>
</comment>
<proteinExistence type="evidence at transcript level"/>
<name>DES1_SORBI</name>
<keyword id="KW-0275">Fatty acid biosynthesis</keyword>
<keyword id="KW-0276">Fatty acid metabolism</keyword>
<keyword id="KW-0444">Lipid biosynthesis</keyword>
<keyword id="KW-0443">Lipid metabolism</keyword>
<keyword id="KW-0472">Membrane</keyword>
<keyword id="KW-0560">Oxidoreductase</keyword>
<keyword id="KW-0812">Transmembrane</keyword>
<keyword id="KW-1133">Transmembrane helix</keyword>
<feature type="chain" id="PRO_0000434401" description="Probable fatty acid desaturase DES1">
    <location>
        <begin position="1"/>
        <end position="388"/>
    </location>
</feature>
<feature type="transmembrane region" description="Helical" evidence="1">
    <location>
        <begin position="62"/>
        <end position="82"/>
    </location>
</feature>
<feature type="transmembrane region" description="Helical" evidence="1">
    <location>
        <begin position="85"/>
        <end position="105"/>
    </location>
</feature>
<feature type="transmembrane region" description="Helical" evidence="1">
    <location>
        <begin position="119"/>
        <end position="139"/>
    </location>
</feature>
<feature type="transmembrane region" description="Helical" evidence="1">
    <location>
        <begin position="177"/>
        <end position="194"/>
    </location>
</feature>
<feature type="transmembrane region" description="Helical" evidence="1">
    <location>
        <begin position="226"/>
        <end position="246"/>
    </location>
</feature>
<feature type="transmembrane region" description="Helical" evidence="1">
    <location>
        <begin position="248"/>
        <end position="268"/>
    </location>
</feature>
<feature type="region of interest" description="Disordered" evidence="2">
    <location>
        <begin position="1"/>
        <end position="33"/>
    </location>
</feature>
<feature type="short sequence motif" description="Histidine box-1" evidence="5">
    <location>
        <begin position="107"/>
        <end position="111"/>
    </location>
</feature>
<feature type="short sequence motif" description="Histidine box-2" evidence="5">
    <location>
        <begin position="143"/>
        <end position="147"/>
    </location>
</feature>
<feature type="short sequence motif" description="Histidine box-3" evidence="5">
    <location>
        <begin position="310"/>
        <end position="314"/>
    </location>
</feature>
<feature type="compositionally biased region" description="Basic and acidic residues" evidence="2">
    <location>
        <begin position="9"/>
        <end position="30"/>
    </location>
</feature>
<evidence type="ECO:0000255" key="1"/>
<evidence type="ECO:0000256" key="2">
    <source>
        <dbReference type="SAM" id="MobiDB-lite"/>
    </source>
</evidence>
<evidence type="ECO:0000269" key="3">
    <source>
    </source>
</evidence>
<evidence type="ECO:0000303" key="4">
    <source>
    </source>
</evidence>
<evidence type="ECO:0000305" key="5"/>
<evidence type="ECO:0000312" key="6">
    <source>
        <dbReference type="EMBL" id="ABN49519.1"/>
    </source>
</evidence>
<accession>A3F5L2</accession>
<gene>
    <name evidence="4" type="primary">DES1</name>
</gene>
<reference key="1">
    <citation type="journal article" date="2007" name="J. Biol. Chem.">
        <title>Functional characterization of desaturases involved in the formation of the terminal double bond of an unusual 16:3Delta(9,12,150) fatty acid isolated from Sorghum bicolor root hairs.</title>
        <authorList>
            <person name="Pan Z."/>
            <person name="Rimando A.M."/>
            <person name="Baerson S.R."/>
            <person name="Fishbein M."/>
            <person name="Duke S.O."/>
        </authorList>
    </citation>
    <scope>NUCLEOTIDE SEQUENCE [MRNA]</scope>
    <scope>TISSUE SPECIFICITY</scope>
</reference>
<protein>
    <recommendedName>
        <fullName evidence="4">Probable fatty acid desaturase DES1</fullName>
        <shortName evidence="4">SbDES1</shortName>
    </recommendedName>
</protein>
<organism evidence="6">
    <name type="scientific">Sorghum bicolor</name>
    <name type="common">Sorghum</name>
    <name type="synonym">Sorghum vulgare</name>
    <dbReference type="NCBI Taxonomy" id="4558"/>
    <lineage>
        <taxon>Eukaryota</taxon>
        <taxon>Viridiplantae</taxon>
        <taxon>Streptophyta</taxon>
        <taxon>Embryophyta</taxon>
        <taxon>Tracheophyta</taxon>
        <taxon>Spermatophyta</taxon>
        <taxon>Magnoliopsida</taxon>
        <taxon>Liliopsida</taxon>
        <taxon>Poales</taxon>
        <taxon>Poaceae</taxon>
        <taxon>PACMAD clade</taxon>
        <taxon>Panicoideae</taxon>
        <taxon>Andropogonodae</taxon>
        <taxon>Andropogoneae</taxon>
        <taxon>Sorghinae</taxon>
        <taxon>Sorghum</taxon>
    </lineage>
</organism>